<name>NANK_VIBVU</name>
<proteinExistence type="inferred from homology"/>
<organism>
    <name type="scientific">Vibrio vulnificus (strain CMCP6)</name>
    <dbReference type="NCBI Taxonomy" id="216895"/>
    <lineage>
        <taxon>Bacteria</taxon>
        <taxon>Pseudomonadati</taxon>
        <taxon>Pseudomonadota</taxon>
        <taxon>Gammaproteobacteria</taxon>
        <taxon>Vibrionales</taxon>
        <taxon>Vibrionaceae</taxon>
        <taxon>Vibrio</taxon>
    </lineage>
</organism>
<reference key="1">
    <citation type="submission" date="2002-12" db="EMBL/GenBank/DDBJ databases">
        <title>Complete genome sequence of Vibrio vulnificus CMCP6.</title>
        <authorList>
            <person name="Rhee J.H."/>
            <person name="Kim S.Y."/>
            <person name="Chung S.S."/>
            <person name="Kim J.J."/>
            <person name="Moon Y.H."/>
            <person name="Jeong H."/>
            <person name="Choy H.E."/>
        </authorList>
    </citation>
    <scope>NUCLEOTIDE SEQUENCE [LARGE SCALE GENOMIC DNA]</scope>
    <source>
        <strain>CMCP6</strain>
    </source>
</reference>
<gene>
    <name evidence="1" type="primary">nanK</name>
    <name type="ordered locus">VV2_0735</name>
</gene>
<feature type="chain" id="PRO_0000095705" description="N-acetylmannosamine kinase">
    <location>
        <begin position="1"/>
        <end position="293"/>
    </location>
</feature>
<feature type="binding site" evidence="1">
    <location>
        <begin position="5"/>
        <end position="12"/>
    </location>
    <ligand>
        <name>ATP</name>
        <dbReference type="ChEBI" id="CHEBI:30616"/>
    </ligand>
</feature>
<feature type="binding site" evidence="1">
    <location>
        <begin position="133"/>
        <end position="140"/>
    </location>
    <ligand>
        <name>ATP</name>
        <dbReference type="ChEBI" id="CHEBI:30616"/>
    </ligand>
</feature>
<feature type="binding site" evidence="1">
    <location>
        <position position="157"/>
    </location>
    <ligand>
        <name>Zn(2+)</name>
        <dbReference type="ChEBI" id="CHEBI:29105"/>
    </ligand>
</feature>
<feature type="binding site" evidence="1">
    <location>
        <position position="167"/>
    </location>
    <ligand>
        <name>Zn(2+)</name>
        <dbReference type="ChEBI" id="CHEBI:29105"/>
    </ligand>
</feature>
<feature type="binding site" evidence="1">
    <location>
        <position position="169"/>
    </location>
    <ligand>
        <name>Zn(2+)</name>
        <dbReference type="ChEBI" id="CHEBI:29105"/>
    </ligand>
</feature>
<feature type="binding site" evidence="1">
    <location>
        <position position="174"/>
    </location>
    <ligand>
        <name>Zn(2+)</name>
        <dbReference type="ChEBI" id="CHEBI:29105"/>
    </ligand>
</feature>
<evidence type="ECO:0000255" key="1">
    <source>
        <dbReference type="HAMAP-Rule" id="MF_01234"/>
    </source>
</evidence>
<dbReference type="EC" id="2.7.1.60" evidence="1"/>
<dbReference type="EMBL" id="AE016796">
    <property type="protein sequence ID" value="AAO07667.1"/>
    <property type="molecule type" value="Genomic_DNA"/>
</dbReference>
<dbReference type="RefSeq" id="WP_011081664.1">
    <property type="nucleotide sequence ID" value="NC_004460.2"/>
</dbReference>
<dbReference type="SMR" id="Q8D612"/>
<dbReference type="KEGG" id="vvu:VV2_0735"/>
<dbReference type="HOGENOM" id="CLU_036604_0_4_6"/>
<dbReference type="UniPathway" id="UPA00629">
    <property type="reaction ID" value="UER00681"/>
</dbReference>
<dbReference type="Proteomes" id="UP000002275">
    <property type="component" value="Chromosome 2"/>
</dbReference>
<dbReference type="GO" id="GO:0005524">
    <property type="term" value="F:ATP binding"/>
    <property type="evidence" value="ECO:0007669"/>
    <property type="project" value="UniProtKB-UniRule"/>
</dbReference>
<dbReference type="GO" id="GO:0009384">
    <property type="term" value="F:N-acylmannosamine kinase activity"/>
    <property type="evidence" value="ECO:0007669"/>
    <property type="project" value="UniProtKB-UniRule"/>
</dbReference>
<dbReference type="GO" id="GO:0008270">
    <property type="term" value="F:zinc ion binding"/>
    <property type="evidence" value="ECO:0007669"/>
    <property type="project" value="UniProtKB-UniRule"/>
</dbReference>
<dbReference type="GO" id="GO:0019262">
    <property type="term" value="P:N-acetylneuraminate catabolic process"/>
    <property type="evidence" value="ECO:0007669"/>
    <property type="project" value="UniProtKB-UniRule"/>
</dbReference>
<dbReference type="Gene3D" id="3.30.420.40">
    <property type="match status" value="2"/>
</dbReference>
<dbReference type="HAMAP" id="MF_01234">
    <property type="entry name" value="ManNAc_kinase"/>
    <property type="match status" value="1"/>
</dbReference>
<dbReference type="InterPro" id="IPR043129">
    <property type="entry name" value="ATPase_NBD"/>
</dbReference>
<dbReference type="InterPro" id="IPR023945">
    <property type="entry name" value="ManNAc_kinase_bac"/>
</dbReference>
<dbReference type="InterPro" id="IPR000600">
    <property type="entry name" value="ROK"/>
</dbReference>
<dbReference type="InterPro" id="IPR049874">
    <property type="entry name" value="ROK_cs"/>
</dbReference>
<dbReference type="NCBIfam" id="NF003461">
    <property type="entry name" value="PRK05082.1"/>
    <property type="match status" value="1"/>
</dbReference>
<dbReference type="PANTHER" id="PTHR18964:SF169">
    <property type="entry name" value="N-ACETYLMANNOSAMINE KINASE"/>
    <property type="match status" value="1"/>
</dbReference>
<dbReference type="PANTHER" id="PTHR18964">
    <property type="entry name" value="ROK (REPRESSOR, ORF, KINASE) FAMILY"/>
    <property type="match status" value="1"/>
</dbReference>
<dbReference type="Pfam" id="PF00480">
    <property type="entry name" value="ROK"/>
    <property type="match status" value="1"/>
</dbReference>
<dbReference type="SUPFAM" id="SSF53067">
    <property type="entry name" value="Actin-like ATPase domain"/>
    <property type="match status" value="1"/>
</dbReference>
<dbReference type="PROSITE" id="PS01125">
    <property type="entry name" value="ROK"/>
    <property type="match status" value="1"/>
</dbReference>
<accession>Q8D612</accession>
<protein>
    <recommendedName>
        <fullName evidence="1">N-acetylmannosamine kinase</fullName>
        <ecNumber evidence="1">2.7.1.60</ecNumber>
    </recommendedName>
    <alternativeName>
        <fullName evidence="1">ManNAc kinase</fullName>
    </alternativeName>
    <alternativeName>
        <fullName evidence="1">N-acetyl-D-mannosamine kinase</fullName>
    </alternativeName>
</protein>
<keyword id="KW-0067">ATP-binding</keyword>
<keyword id="KW-0119">Carbohydrate metabolism</keyword>
<keyword id="KW-0418">Kinase</keyword>
<keyword id="KW-0479">Metal-binding</keyword>
<keyword id="KW-0547">Nucleotide-binding</keyword>
<keyword id="KW-0808">Transferase</keyword>
<keyword id="KW-0862">Zinc</keyword>
<comment type="function">
    <text evidence="1">Catalyzes the phosphorylation of N-acetylmannosamine (ManNAc) to ManNAc-6-P.</text>
</comment>
<comment type="catalytic activity">
    <reaction evidence="1">
        <text>an N-acyl-D-mannosamine + ATP = an N-acyl-D-mannosamine 6-phosphate + ADP + H(+)</text>
        <dbReference type="Rhea" id="RHEA:23832"/>
        <dbReference type="ChEBI" id="CHEBI:15378"/>
        <dbReference type="ChEBI" id="CHEBI:16062"/>
        <dbReference type="ChEBI" id="CHEBI:30616"/>
        <dbReference type="ChEBI" id="CHEBI:57666"/>
        <dbReference type="ChEBI" id="CHEBI:456216"/>
        <dbReference type="EC" id="2.7.1.60"/>
    </reaction>
</comment>
<comment type="pathway">
    <text evidence="1">Amino-sugar metabolism; N-acetylneuraminate degradation; D-fructose 6-phosphate from N-acetylneuraminate: step 2/5.</text>
</comment>
<comment type="subunit">
    <text evidence="1">Homodimer.</text>
</comment>
<comment type="similarity">
    <text evidence="1">Belongs to the ROK (NagC/XylR) family. NanK subfamily.</text>
</comment>
<sequence>MKVLAIDIGGTKIALGNVVEGHLQHRKQFPTPVVNDATTLAKEILAHCQAWLSDVDAIGISTTGLVSEQGISAINPGTLSFPTPFPLHSELHRLSGKPVKMLNDAQAAAWYEFLQLSPELDVRNMAYITVSTGVGGGLVINQQLHKGKSNFAGHIGHTVLDPNGPLCGCQQRGCVEAIASGNAINAGAQALFGQAISNIELFQLAQHNEQASTLIQQSAEAIAQLCLNLKATLDLDLVVIGGGVGLARGYLARVQAFIDKQPLVFQVKVRAAVGDYDACLLGAAFQFEESNLS</sequence>